<gene>
    <name evidence="6" type="primary">Tas2r102</name>
    <name evidence="2" type="synonym">T2r51</name>
</gene>
<reference evidence="4" key="1">
    <citation type="journal article" date="2002" name="Proc. Natl. Acad. Sci. U.S.A.">
        <title>Expression of bitter taste receptors of the T2R family in the gastrointestinal tract and enteroendocrine STC-1 cells.</title>
        <authorList>
            <person name="Wu S.V."/>
            <person name="Rozengurt N."/>
            <person name="Yang M."/>
            <person name="Young S.H."/>
            <person name="Sinnett-Smith J."/>
            <person name="Rozengurt E."/>
        </authorList>
    </citation>
    <scope>NUCLEOTIDE SEQUENCE [GENOMIC DNA]</scope>
</reference>
<reference key="2">
    <citation type="journal article" date="2009" name="PLoS Biol.">
        <title>Lineage-specific biology revealed by a finished genome assembly of the mouse.</title>
        <authorList>
            <person name="Church D.M."/>
            <person name="Goodstadt L."/>
            <person name="Hillier L.W."/>
            <person name="Zody M.C."/>
            <person name="Goldstein S."/>
            <person name="She X."/>
            <person name="Bult C.J."/>
            <person name="Agarwala R."/>
            <person name="Cherry J.L."/>
            <person name="DiCuccio M."/>
            <person name="Hlavina W."/>
            <person name="Kapustin Y."/>
            <person name="Meric P."/>
            <person name="Maglott D."/>
            <person name="Birtle Z."/>
            <person name="Marques A.C."/>
            <person name="Graves T."/>
            <person name="Zhou S."/>
            <person name="Teague B."/>
            <person name="Potamousis K."/>
            <person name="Churas C."/>
            <person name="Place M."/>
            <person name="Herschleb J."/>
            <person name="Runnheim R."/>
            <person name="Forrest D."/>
            <person name="Amos-Landgraf J."/>
            <person name="Schwartz D.C."/>
            <person name="Cheng Z."/>
            <person name="Lindblad-Toh K."/>
            <person name="Eichler E.E."/>
            <person name="Ponting C.P."/>
        </authorList>
    </citation>
    <scope>NUCLEOTIDE SEQUENCE [LARGE SCALE GENOMIC DNA]</scope>
    <source>
        <strain>C57BL/6J</strain>
    </source>
</reference>
<reference evidence="3 5" key="3">
    <citation type="journal article" date="2003" name="Mol. Biol. Evol.">
        <title>Adaptive diversification of bitter taste receptor genes in mammalian evolution.</title>
        <authorList>
            <person name="Shi P."/>
            <person name="Zhang J."/>
            <person name="Yang H."/>
            <person name="Zhang Y.-P."/>
        </authorList>
    </citation>
    <scope>IDENTIFICATION</scope>
</reference>
<comment type="function">
    <text evidence="3">Putative taste receptor which may play a role in the perception of bitterness.</text>
</comment>
<comment type="subcellular location">
    <subcellularLocation>
        <location evidence="3">Membrane</location>
        <topology evidence="3">Multi-pass membrane protein</topology>
    </subcellularLocation>
</comment>
<comment type="miscellaneous">
    <text evidence="3">Several bitter taste receptors are expressed in a single taste receptor cell.</text>
</comment>
<comment type="similarity">
    <text evidence="1">Belongs to the G-protein coupled receptor T2R family.</text>
</comment>
<comment type="sequence caution" evidence="3">
    <conflict type="erroneous initiation">
        <sequence resource="EMBL-CDS" id="AAL85203"/>
    </conflict>
</comment>
<sequence length="329" mass="38450">MNMESVLHNFATVLIYVEFIFGNLSNGFIVLSNFLDWVIKQKLSLIDKILLTLAISRITLIWEIYAWFKSLYDPSSFLIGIEFQIIYFSWVLSSHFSLWLATTLSVFYLLRIANCSWQIFLYLKWRLKQLIVGMLLGSLVFLLGNLMQSMLEERFYQYGRNTSVNTMSNDLAMWTELIFFNMAMFSVIPFTLALISFLLLIFSLWKHLQKMQLISRRHRDPSTKAHMNALRIMVSFLLLYTMHFLSLLISWIAQKHQSELADIIGMITELMYPSVHSCILILGNSKLKQTSLCMLRHLRCRLKGENITIAYSNQITSFCVFCVANKSMR</sequence>
<dbReference type="EMBL" id="AF412306">
    <property type="protein sequence ID" value="AAL85203.1"/>
    <property type="status" value="ALT_INIT"/>
    <property type="molecule type" value="Genomic_DNA"/>
</dbReference>
<dbReference type="EMBL" id="AC152822">
    <property type="status" value="NOT_ANNOTATED_CDS"/>
    <property type="molecule type" value="Genomic_DNA"/>
</dbReference>
<dbReference type="EMBL" id="BK001080">
    <property type="protein sequence ID" value="DAA01219.1"/>
    <property type="molecule type" value="Genomic_DNA"/>
</dbReference>
<dbReference type="SMR" id="Q7M717"/>
<dbReference type="STRING" id="10090.ENSMUSP00000068332"/>
<dbReference type="GlyCosmos" id="Q7M717">
    <property type="glycosylation" value="1 site, No reported glycans"/>
</dbReference>
<dbReference type="GlyGen" id="Q7M717">
    <property type="glycosylation" value="1 site"/>
</dbReference>
<dbReference type="PaxDb" id="10090-ENSMUSP00000068332"/>
<dbReference type="AGR" id="MGI:2681171"/>
<dbReference type="MGI" id="MGI:2681171">
    <property type="gene designation" value="Tas2r102"/>
</dbReference>
<dbReference type="eggNOG" id="ENOG502TE6X">
    <property type="taxonomic scope" value="Eukaryota"/>
</dbReference>
<dbReference type="InParanoid" id="Q7M717"/>
<dbReference type="OrthoDB" id="8876749at2759"/>
<dbReference type="PhylomeDB" id="Q7M717"/>
<dbReference type="PRO" id="PR:Q7M717"/>
<dbReference type="Proteomes" id="UP000000589">
    <property type="component" value="Unplaced"/>
</dbReference>
<dbReference type="RNAct" id="Q7M717">
    <property type="molecule type" value="protein"/>
</dbReference>
<dbReference type="GO" id="GO:0016020">
    <property type="term" value="C:membrane"/>
    <property type="evidence" value="ECO:0007669"/>
    <property type="project" value="UniProtKB-SubCell"/>
</dbReference>
<dbReference type="GO" id="GO:0033038">
    <property type="term" value="F:bitter taste receptor activity"/>
    <property type="evidence" value="ECO:0007669"/>
    <property type="project" value="InterPro"/>
</dbReference>
<dbReference type="GO" id="GO:0004930">
    <property type="term" value="F:G protein-coupled receptor activity"/>
    <property type="evidence" value="ECO:0007669"/>
    <property type="project" value="UniProtKB-KW"/>
</dbReference>
<dbReference type="GO" id="GO:0001580">
    <property type="term" value="P:detection of chemical stimulus involved in sensory perception of bitter taste"/>
    <property type="evidence" value="ECO:0000304"/>
    <property type="project" value="MGI"/>
</dbReference>
<dbReference type="CDD" id="cd15026">
    <property type="entry name" value="7tm_TAS2R13"/>
    <property type="match status" value="1"/>
</dbReference>
<dbReference type="FunFam" id="1.20.1070.10:FF:000042">
    <property type="entry name" value="Taste receptor type 2 member 7"/>
    <property type="match status" value="1"/>
</dbReference>
<dbReference type="Gene3D" id="1.20.1070.10">
    <property type="entry name" value="Rhodopsin 7-helix transmembrane proteins"/>
    <property type="match status" value="1"/>
</dbReference>
<dbReference type="InterPro" id="IPR007960">
    <property type="entry name" value="TAS2R"/>
</dbReference>
<dbReference type="PANTHER" id="PTHR11394">
    <property type="entry name" value="TASTE RECEPTOR TYPE 2"/>
    <property type="match status" value="1"/>
</dbReference>
<dbReference type="PANTHER" id="PTHR11394:SF60">
    <property type="entry name" value="TASTE RECEPTOR TYPE 2 MEMBER 102"/>
    <property type="match status" value="1"/>
</dbReference>
<dbReference type="Pfam" id="PF05296">
    <property type="entry name" value="TAS2R"/>
    <property type="match status" value="1"/>
</dbReference>
<dbReference type="SUPFAM" id="SSF81321">
    <property type="entry name" value="Family A G protein-coupled receptor-like"/>
    <property type="match status" value="1"/>
</dbReference>
<accession>Q7M717</accession>
<accession>Q71QD0</accession>
<name>TR102_MOUSE</name>
<evidence type="ECO:0000255" key="1"/>
<evidence type="ECO:0000303" key="2">
    <source>
    </source>
</evidence>
<evidence type="ECO:0000305" key="3"/>
<evidence type="ECO:0000312" key="4">
    <source>
        <dbReference type="EMBL" id="AAL85203.1"/>
    </source>
</evidence>
<evidence type="ECO:0000312" key="5">
    <source>
        <dbReference type="EMBL" id="DAA01219.1"/>
    </source>
</evidence>
<evidence type="ECO:0000312" key="6">
    <source>
        <dbReference type="MGI" id="MGI:2681171"/>
    </source>
</evidence>
<feature type="chain" id="PRO_0000248246" description="Taste receptor type 2 member 102">
    <location>
        <begin position="1"/>
        <end position="329"/>
    </location>
</feature>
<feature type="topological domain" description="Extracellular" evidence="1">
    <location>
        <begin position="1"/>
        <end position="9"/>
    </location>
</feature>
<feature type="transmembrane region" description="Helical; Name=1" evidence="1">
    <location>
        <begin position="10"/>
        <end position="30"/>
    </location>
</feature>
<feature type="topological domain" description="Cytoplasmic" evidence="1">
    <location>
        <begin position="31"/>
        <end position="47"/>
    </location>
</feature>
<feature type="transmembrane region" description="Helical; Name=2" evidence="1">
    <location>
        <begin position="48"/>
        <end position="68"/>
    </location>
</feature>
<feature type="topological domain" description="Extracellular" evidence="1">
    <location>
        <begin position="69"/>
        <end position="85"/>
    </location>
</feature>
<feature type="transmembrane region" description="Helical; Name=3" evidence="1">
    <location>
        <begin position="86"/>
        <end position="108"/>
    </location>
</feature>
<feature type="topological domain" description="Cytoplasmic" evidence="1">
    <location>
        <begin position="109"/>
        <end position="129"/>
    </location>
</feature>
<feature type="transmembrane region" description="Helical; Name=4" evidence="1">
    <location>
        <begin position="130"/>
        <end position="150"/>
    </location>
</feature>
<feature type="topological domain" description="Extracellular" evidence="1">
    <location>
        <begin position="151"/>
        <end position="181"/>
    </location>
</feature>
<feature type="transmembrane region" description="Helical; Name=5" evidence="1">
    <location>
        <begin position="182"/>
        <end position="202"/>
    </location>
</feature>
<feature type="topological domain" description="Cytoplasmic" evidence="1">
    <location>
        <begin position="203"/>
        <end position="231"/>
    </location>
</feature>
<feature type="transmembrane region" description="Helical; Name=6" evidence="1">
    <location>
        <begin position="232"/>
        <end position="252"/>
    </location>
</feature>
<feature type="topological domain" description="Extracellular" evidence="1">
    <location>
        <begin position="253"/>
        <end position="262"/>
    </location>
</feature>
<feature type="transmembrane region" description="Helical; Name=7" evidence="1">
    <location>
        <begin position="263"/>
        <end position="283"/>
    </location>
</feature>
<feature type="topological domain" description="Cytoplasmic" evidence="1">
    <location>
        <begin position="284"/>
        <end position="329"/>
    </location>
</feature>
<feature type="glycosylation site" description="N-linked (GlcNAc...) asparagine" evidence="1">
    <location>
        <position position="161"/>
    </location>
</feature>
<feature type="sequence conflict" description="In Ref. 1; AAL85203." evidence="3" ref="1">
    <original>L</original>
    <variation>N</variation>
    <location>
        <position position="60"/>
    </location>
</feature>
<feature type="sequence conflict" description="In Ref. 1; AAL85203." evidence="3" ref="1">
    <original>F</original>
    <variation>V</variation>
    <location>
        <position position="155"/>
    </location>
</feature>
<protein>
    <recommendedName>
        <fullName>Taste receptor type 2 member 102</fullName>
        <shortName>T2R102</shortName>
        <shortName>mT2R51</shortName>
    </recommendedName>
    <alternativeName>
        <fullName>STC9-7</fullName>
    </alternativeName>
</protein>
<organism>
    <name type="scientific">Mus musculus</name>
    <name type="common">Mouse</name>
    <dbReference type="NCBI Taxonomy" id="10090"/>
    <lineage>
        <taxon>Eukaryota</taxon>
        <taxon>Metazoa</taxon>
        <taxon>Chordata</taxon>
        <taxon>Craniata</taxon>
        <taxon>Vertebrata</taxon>
        <taxon>Euteleostomi</taxon>
        <taxon>Mammalia</taxon>
        <taxon>Eutheria</taxon>
        <taxon>Euarchontoglires</taxon>
        <taxon>Glires</taxon>
        <taxon>Rodentia</taxon>
        <taxon>Myomorpha</taxon>
        <taxon>Muroidea</taxon>
        <taxon>Muridae</taxon>
        <taxon>Murinae</taxon>
        <taxon>Mus</taxon>
        <taxon>Mus</taxon>
    </lineage>
</organism>
<proteinExistence type="inferred from homology"/>
<keyword id="KW-0297">G-protein coupled receptor</keyword>
<keyword id="KW-0325">Glycoprotein</keyword>
<keyword id="KW-0472">Membrane</keyword>
<keyword id="KW-0675">Receptor</keyword>
<keyword id="KW-1185">Reference proteome</keyword>
<keyword id="KW-0716">Sensory transduction</keyword>
<keyword id="KW-0919">Taste</keyword>
<keyword id="KW-0807">Transducer</keyword>
<keyword id="KW-0812">Transmembrane</keyword>
<keyword id="KW-1133">Transmembrane helix</keyword>